<sequence length="380" mass="40674">MMFSGFNADYEASSSRCSSASPAGDSLSYYHSPADSFSSMGSPVNAQDFCTDLAVSSVNFIPTVTAISISPDLQWLVQPTLVSSVAPSQTRAPHPYGVPTPSAGAYSRAGAVKTMPGGRAQSIGRRGKVEQLSPEEEEKRRIRRERNKMAAAKCRNRRRELTDTLQAETDQLEDEKSALQTEIANLLKEKEKLEFILAAHRPACKIPDDLGFPEEMSVASLDLSGGLPEAATPESEEAFTLPLLNDPEPKPSVEPVKKVSSMELKAEPFDDFLFPASSRPGGSETARSVPDMDLSGSFYAADWEPLHGGSLGMGPMATELEPLCTPVVTCTPSCTAYTSSFVFTYPEADSFPSCAAAHRKGSSSNEPSSDSLSSPTLLAL</sequence>
<dbReference type="EMBL" id="Y14808">
    <property type="protein sequence ID" value="CAB39278.1"/>
    <property type="molecule type" value="Genomic_DNA"/>
</dbReference>
<dbReference type="EMBL" id="AJ132510">
    <property type="protein sequence ID" value="CAB40144.1"/>
    <property type="molecule type" value="Genomic_DNA"/>
</dbReference>
<dbReference type="RefSeq" id="NP_001116585.1">
    <property type="nucleotide sequence ID" value="NM_001123113.1"/>
</dbReference>
<dbReference type="SMR" id="O97930"/>
<dbReference type="FunCoup" id="O97930">
    <property type="interactions" value="519"/>
</dbReference>
<dbReference type="STRING" id="9823.ENSSSCP00000070926"/>
<dbReference type="GlyGen" id="O97930">
    <property type="glycosylation" value="1 site"/>
</dbReference>
<dbReference type="PaxDb" id="9823-ENSSSCP00000002583"/>
<dbReference type="PeptideAtlas" id="O97930"/>
<dbReference type="GeneID" id="100144486"/>
<dbReference type="KEGG" id="ssc:100144486"/>
<dbReference type="CTD" id="2353"/>
<dbReference type="eggNOG" id="KOG1414">
    <property type="taxonomic scope" value="Eukaryota"/>
</dbReference>
<dbReference type="HOGENOM" id="CLU_049742_2_0_1"/>
<dbReference type="InParanoid" id="O97930"/>
<dbReference type="OrthoDB" id="5866312at2759"/>
<dbReference type="TreeFam" id="TF326301"/>
<dbReference type="Proteomes" id="UP000008227">
    <property type="component" value="Unplaced"/>
</dbReference>
<dbReference type="Proteomes" id="UP000314985">
    <property type="component" value="Unplaced"/>
</dbReference>
<dbReference type="Proteomes" id="UP000694570">
    <property type="component" value="Unplaced"/>
</dbReference>
<dbReference type="Proteomes" id="UP000694571">
    <property type="component" value="Unplaced"/>
</dbReference>
<dbReference type="Proteomes" id="UP000694720">
    <property type="component" value="Unplaced"/>
</dbReference>
<dbReference type="Proteomes" id="UP000694722">
    <property type="component" value="Unplaced"/>
</dbReference>
<dbReference type="Proteomes" id="UP000694723">
    <property type="component" value="Unplaced"/>
</dbReference>
<dbReference type="Proteomes" id="UP000694724">
    <property type="component" value="Unplaced"/>
</dbReference>
<dbReference type="Proteomes" id="UP000694725">
    <property type="component" value="Unplaced"/>
</dbReference>
<dbReference type="Proteomes" id="UP000694726">
    <property type="component" value="Unplaced"/>
</dbReference>
<dbReference type="Proteomes" id="UP000694727">
    <property type="component" value="Unplaced"/>
</dbReference>
<dbReference type="Proteomes" id="UP000694728">
    <property type="component" value="Unplaced"/>
</dbReference>
<dbReference type="GO" id="GO:0005829">
    <property type="term" value="C:cytosol"/>
    <property type="evidence" value="ECO:0007669"/>
    <property type="project" value="UniProtKB-SubCell"/>
</dbReference>
<dbReference type="GO" id="GO:0005783">
    <property type="term" value="C:endoplasmic reticulum"/>
    <property type="evidence" value="ECO:0007669"/>
    <property type="project" value="UniProtKB-SubCell"/>
</dbReference>
<dbReference type="GO" id="GO:0005634">
    <property type="term" value="C:nucleus"/>
    <property type="evidence" value="ECO:0000318"/>
    <property type="project" value="GO_Central"/>
</dbReference>
<dbReference type="GO" id="GO:0000981">
    <property type="term" value="F:DNA-binding transcription factor activity, RNA polymerase II-specific"/>
    <property type="evidence" value="ECO:0000318"/>
    <property type="project" value="GO_Central"/>
</dbReference>
<dbReference type="GO" id="GO:0000978">
    <property type="term" value="F:RNA polymerase II cis-regulatory region sequence-specific DNA binding"/>
    <property type="evidence" value="ECO:0000318"/>
    <property type="project" value="GO_Central"/>
</dbReference>
<dbReference type="GO" id="GO:0006357">
    <property type="term" value="P:regulation of transcription by RNA polymerase II"/>
    <property type="evidence" value="ECO:0000318"/>
    <property type="project" value="GO_Central"/>
</dbReference>
<dbReference type="CDD" id="cd14721">
    <property type="entry name" value="bZIP_Fos"/>
    <property type="match status" value="1"/>
</dbReference>
<dbReference type="FunFam" id="1.20.5.170:FF:000006">
    <property type="entry name" value="fos-related antigen 2 isoform X1"/>
    <property type="match status" value="1"/>
</dbReference>
<dbReference type="Gene3D" id="1.20.5.170">
    <property type="match status" value="1"/>
</dbReference>
<dbReference type="InterPro" id="IPR000837">
    <property type="entry name" value="AP-1"/>
</dbReference>
<dbReference type="InterPro" id="IPR004827">
    <property type="entry name" value="bZIP"/>
</dbReference>
<dbReference type="InterPro" id="IPR046347">
    <property type="entry name" value="bZIP_sf"/>
</dbReference>
<dbReference type="PANTHER" id="PTHR23351">
    <property type="entry name" value="FOS TRANSCRIPTION FACTOR-RELATED"/>
    <property type="match status" value="1"/>
</dbReference>
<dbReference type="PANTHER" id="PTHR23351:SF4">
    <property type="entry name" value="PROTEIN C-FOS"/>
    <property type="match status" value="1"/>
</dbReference>
<dbReference type="Pfam" id="PF00170">
    <property type="entry name" value="bZIP_1"/>
    <property type="match status" value="1"/>
</dbReference>
<dbReference type="PRINTS" id="PR00042">
    <property type="entry name" value="LEUZIPPRFOS"/>
</dbReference>
<dbReference type="SMART" id="SM00338">
    <property type="entry name" value="BRLZ"/>
    <property type="match status" value="1"/>
</dbReference>
<dbReference type="SUPFAM" id="SSF57959">
    <property type="entry name" value="Leucine zipper domain"/>
    <property type="match status" value="1"/>
</dbReference>
<dbReference type="PROSITE" id="PS50217">
    <property type="entry name" value="BZIP"/>
    <property type="match status" value="1"/>
</dbReference>
<dbReference type="PROSITE" id="PS00036">
    <property type="entry name" value="BZIP_BASIC"/>
    <property type="match status" value="1"/>
</dbReference>
<evidence type="ECO:0000250" key="1"/>
<evidence type="ECO:0000250" key="2">
    <source>
        <dbReference type="UniProtKB" id="P01100"/>
    </source>
</evidence>
<evidence type="ECO:0000250" key="3">
    <source>
        <dbReference type="UniProtKB" id="P01101"/>
    </source>
</evidence>
<evidence type="ECO:0000250" key="4">
    <source>
        <dbReference type="UniProtKB" id="P12841"/>
    </source>
</evidence>
<evidence type="ECO:0000255" key="5">
    <source>
        <dbReference type="PROSITE-ProRule" id="PRU00978"/>
    </source>
</evidence>
<evidence type="ECO:0000256" key="6">
    <source>
        <dbReference type="SAM" id="MobiDB-lite"/>
    </source>
</evidence>
<evidence type="ECO:0000305" key="7"/>
<name>FOS_PIG</name>
<proteinExistence type="inferred from homology"/>
<reference key="1">
    <citation type="journal article" date="1996" name="Mol. Cell. Endocrinol.">
        <title>Molecular cloning of c-jun and c-fos cDNAs from porcine anterior pituitary and their involvement in gonadotropin-releasing hormone stimulation.</title>
        <authorList>
            <person name="Chung H.-O."/>
            <person name="Kato T."/>
            <person name="Kato Y."/>
        </authorList>
    </citation>
    <scope>NUCLEOTIDE SEQUENCE [GENOMIC DNA]</scope>
    <source>
        <tissue>Pituitary anterior lobe</tissue>
    </source>
</reference>
<reference key="2">
    <citation type="journal article" date="1996" name="Mol. Cell. Endocrinol.">
        <authorList>
            <person name="Chung H.-O."/>
            <person name="Kato T."/>
            <person name="Kato Y."/>
        </authorList>
    </citation>
    <scope>ERRATUM OF PUBMED:8793856</scope>
</reference>
<reference key="3">
    <citation type="submission" date="1999-01" db="EMBL/GenBank/DDBJ databases">
        <title>The complete sequence of the porcine c-fos proto-oncogene.</title>
        <authorList>
            <person name="Reiner G."/>
            <person name="Heinricy J."/>
            <person name="Dzapo V."/>
        </authorList>
    </citation>
    <scope>NUCLEOTIDE SEQUENCE [GENOMIC DNA]</scope>
    <source>
        <tissue>Liver</tissue>
    </source>
</reference>
<reference key="4">
    <citation type="submission" date="1997-09" db="EMBL/GenBank/DDBJ databases">
        <authorList>
            <person name="Mimmack M.L."/>
        </authorList>
    </citation>
    <scope>NUCLEOTIDE SEQUENCE [GENOMIC DNA] OF 145-240</scope>
    <source>
        <strain>Large white</strain>
    </source>
</reference>
<protein>
    <recommendedName>
        <fullName evidence="7">Protein c-Fos</fullName>
    </recommendedName>
    <alternativeName>
        <fullName>Cellular oncogene fos</fullName>
    </alternativeName>
    <alternativeName>
        <fullName evidence="7">Transcription factor AP-1 subunit c-Fos</fullName>
    </alternativeName>
</protein>
<organism>
    <name type="scientific">Sus scrofa</name>
    <name type="common">Pig</name>
    <dbReference type="NCBI Taxonomy" id="9823"/>
    <lineage>
        <taxon>Eukaryota</taxon>
        <taxon>Metazoa</taxon>
        <taxon>Chordata</taxon>
        <taxon>Craniata</taxon>
        <taxon>Vertebrata</taxon>
        <taxon>Euteleostomi</taxon>
        <taxon>Mammalia</taxon>
        <taxon>Eutheria</taxon>
        <taxon>Laurasiatheria</taxon>
        <taxon>Artiodactyla</taxon>
        <taxon>Suina</taxon>
        <taxon>Suidae</taxon>
        <taxon>Sus</taxon>
    </lineage>
</organism>
<feature type="chain" id="PRO_0000076468" description="Protein c-Fos">
    <location>
        <begin position="1"/>
        <end position="380"/>
    </location>
</feature>
<feature type="domain" description="bZIP" evidence="5">
    <location>
        <begin position="137"/>
        <end position="200"/>
    </location>
</feature>
<feature type="region of interest" description="Disordered" evidence="6">
    <location>
        <begin position="115"/>
        <end position="137"/>
    </location>
</feature>
<feature type="region of interest" description="Basic motif; required for the activation of phospholipid synthesis, but not for CDS1-binding" evidence="5">
    <location>
        <begin position="139"/>
        <end position="159"/>
    </location>
</feature>
<feature type="region of interest" description="Leucine-zipper" evidence="5">
    <location>
        <begin position="165"/>
        <end position="193"/>
    </location>
</feature>
<feature type="region of interest" description="Disordered" evidence="6">
    <location>
        <begin position="354"/>
        <end position="380"/>
    </location>
</feature>
<feature type="compositionally biased region" description="Low complexity" evidence="6">
    <location>
        <begin position="362"/>
        <end position="374"/>
    </location>
</feature>
<feature type="modified residue" description="Phosphotyrosine; by SRC" evidence="2">
    <location>
        <position position="10"/>
    </location>
</feature>
<feature type="modified residue" description="Phosphotyrosine; by SRC" evidence="2">
    <location>
        <position position="30"/>
    </location>
</feature>
<feature type="modified residue" description="Phosphothreonine" evidence="3">
    <location>
        <position position="232"/>
    </location>
</feature>
<feature type="modified residue" description="Phosphothreonine; by MAPK1 and MAPK3" evidence="2">
    <location>
        <position position="325"/>
    </location>
</feature>
<feature type="modified residue" description="Phosphothreonine; by MAPK1 and MAPK3" evidence="2">
    <location>
        <position position="331"/>
    </location>
</feature>
<feature type="modified residue" description="Phosphoserine; by MAPK1, MAPK3 and RPS6KA3" evidence="2">
    <location>
        <position position="362"/>
    </location>
</feature>
<feature type="modified residue" description="Phosphoserine; by MAPK1 and MAPK3" evidence="2">
    <location>
        <position position="374"/>
    </location>
</feature>
<feature type="cross-link" description="Glycyl lysine isopeptide (Lys-Gly) (interchain with G-Cter in SUMO2)" evidence="2">
    <location>
        <position position="113"/>
    </location>
</feature>
<feature type="cross-link" description="Glycyl lysine isopeptide (Lys-Gly) (interchain with G-Cter in SUMO2)" evidence="2">
    <location>
        <position position="128"/>
    </location>
</feature>
<feature type="cross-link" description="Glycyl lysine isopeptide (Lys-Gly) (interchain with G-Cter in SUMO); alternate" evidence="1">
    <location>
        <position position="265"/>
    </location>
</feature>
<feature type="cross-link" description="Glycyl lysine isopeptide (Lys-Gly) (interchain with G-Cter in SUMO2); alternate" evidence="2">
    <location>
        <position position="265"/>
    </location>
</feature>
<feature type="sequence conflict" description="In Ref. 3; CAB40144." evidence="7" ref="3">
    <original>V</original>
    <variation>A</variation>
    <location>
        <position position="58"/>
    </location>
</feature>
<feature type="sequence conflict" description="In Ref. 3; CAB40144." evidence="7" ref="3">
    <original>I</original>
    <variation>T</variation>
    <location>
        <position position="69"/>
    </location>
</feature>
<feature type="sequence conflict" description="In Ref. 3; CAB40144." evidence="7" ref="3">
    <original>A</original>
    <variation>V</variation>
    <location>
        <position position="111"/>
    </location>
</feature>
<feature type="sequence conflict" description="In Ref. 3; CAB40144." evidence="7" ref="3">
    <original>K</original>
    <variation>N</variation>
    <location>
        <position position="258"/>
    </location>
</feature>
<feature type="sequence conflict" description="In Ref. 3; CAB40144." evidence="7" ref="3">
    <original>A</original>
    <variation>T</variation>
    <location>
        <position position="336"/>
    </location>
</feature>
<accession>O97930</accession>
<comment type="function">
    <text evidence="1">Nuclear phosphoprotein which forms a tight but non-covalently linked complex with the JUN/AP-1 transcription factor. On TGF-beta activation, forms a multimeric SMAD3/SMAD4/JUN/FOS complex, at the AP1/SMAD-binding site to regulate TGF-beta-mediated signaling. Has a critical function in regulating the development of cells destined to form and maintain the skeleton. It is thought to have an important role in signal transduction, cell proliferation and differentiation (By similarity). In growing cells, activates phospholipid synthesis, possibly by activating CDS1 and PI4K2A. This activity requires Tyr-dephosphorylation and association with the endoplasmic reticulum (By similarity).</text>
</comment>
<comment type="subunit">
    <text evidence="2 3 4">Heterodimer; with JUN (By similarity). Component of the SMAD3/SMAD4/JUN/FOS complex required for synergistic TGF-beta-mediated transcription at the AP1-binding site (By similarity). Interacts with SMAD3; the interaction is weak even on TGF-beta activation (By similarity). Interacts with MAFB (By similarity). Interacts with TSC22D3 (via N-terminus); this interaction inhibits the binding of active AP1 to its target DNA (By similarity). Interacts with CDS1 and PI4K2A (By similarity). Interacts (via bZIP domain and leucine-zipper region) with the multiprotein chromatin-remodeling complexes SWI/SNF: SWI/SNF-A (BAF) subunits SMARCB1, SMARCC2 and SMARCD1 (By similarity). Interacts (via bZIP domain and leucine-zipper region) with ARID1A (By similarity).</text>
</comment>
<comment type="subcellular location">
    <subcellularLocation>
        <location evidence="5">Nucleus</location>
    </subcellularLocation>
    <subcellularLocation>
        <location evidence="1">Endoplasmic reticulum</location>
    </subcellularLocation>
    <subcellularLocation>
        <location evidence="1">Cytoplasm</location>
        <location evidence="1">Cytosol</location>
    </subcellularLocation>
    <text evidence="1">In quiescent cells, present in very small amounts in the cytosol. Following induction of cell growth, first localizes to the endoplasmic reticulum and only later to the nucleus. Localization at the endoplasmic reticulum requires dephosphorylation at Tyr-10 and Tyr-30 (By similarity).</text>
</comment>
<comment type="PTM">
    <text evidence="1">Phosphorylated in the C-terminal upon stimulation by nerve growth factor (NGF) and epidermal growth factor (EGF). Phosphorylated, in vitro, by MAPK and RSK1. Phosphorylation on both Ser-362 and Ser-374 by MAPK1/2 and RSK1/2 leads to protein stabilization with phosphorylation on Ser-374 being the major site for protein stabilization on NGF stimulation. Phosphorylation on Ser-362 and Ser-374 primes further phosphorylations on Thr-325 and Thr-331 through promoting docking of MAPK to the DEF domain. Phosphorylation on Thr-232, induced by HA-RAS, activates the transcriptional activity and antagonizes sumoylation. Phosphorylation on Ser-362 by RSK2 in osteoblasts contributes to osteoblast transformation (By similarity).</text>
</comment>
<comment type="PTM">
    <text evidence="1">Constitutively sumoylated with SUMO1, SUMO2 and SUMO3. Desumoylated by SENP2. Sumoylation requires heterodimerization with JUN and is enhanced by mitogen stimulation. Sumoylation inhibits the AP-1 transcriptional activity and is, itself, inhibited by Ras-activated phosphorylation on Thr-232 (By similarity).</text>
</comment>
<comment type="PTM">
    <text evidence="1">In quiescent cells, the small amount of FOS present is phosphorylated at Tyr-10 and Tyr-30 by SRC. This Tyr-phosphorylated form is cytosolic. In growing cells, dephosphorylated by PTPN2. Dephosphorylation leads to the association with endoplasmic reticulum membranes and activation of phospholipid synthesis (By similarity).</text>
</comment>
<comment type="similarity">
    <text evidence="7">Belongs to the bZIP family. Fos subfamily.</text>
</comment>
<keyword id="KW-0963">Cytoplasm</keyword>
<keyword id="KW-0238">DNA-binding</keyword>
<keyword id="KW-0256">Endoplasmic reticulum</keyword>
<keyword id="KW-1017">Isopeptide bond</keyword>
<keyword id="KW-0539">Nucleus</keyword>
<keyword id="KW-0597">Phosphoprotein</keyword>
<keyword id="KW-0656">Proto-oncogene</keyword>
<keyword id="KW-1185">Reference proteome</keyword>
<keyword id="KW-0832">Ubl conjugation</keyword>
<gene>
    <name type="primary">FOS</name>
</gene>